<gene>
    <name type="primary">EMC4</name>
    <name type="synonym">TMEM85</name>
</gene>
<comment type="function">
    <text evidence="1">Part of the endoplasmic reticulum membrane protein complex (EMC) that enables the energy-independent insertion into endoplasmic reticulum membranes of newly synthesized membrane proteins. Preferentially accommodates proteins with transmembrane domains that are weakly hydrophobic or contain destabilizing features such as charged and aromatic residues. Involved in the cotranslational insertion of multi-pass membrane proteins in which stop-transfer membrane-anchor sequences become ER membrane spanning helices. It is also required for the post-translational insertion of tail-anchored/TA proteins in endoplasmic reticulum membranes. By mediating the proper cotranslational insertion of N-terminal transmembrane domains in an N-exo topology, with translocated N-terminus in the lumen of the ER, controls the topology of multi-pass membrane proteins like the G protein-coupled receptors. By regulating the insertion of various proteins in membranes, it is indirectly involved in many cellular processes.</text>
</comment>
<comment type="subunit">
    <text evidence="1">Component of the ER membrane protein complex (EMC).</text>
</comment>
<comment type="subcellular location">
    <subcellularLocation>
        <location evidence="1">Endoplasmic reticulum membrane</location>
        <topology evidence="1">Multi-pass membrane protein</topology>
    </subcellularLocation>
    <text evidence="1">Could also be a single-pass transmembrane protein with cytosolic N-terminus and lumenal C-terminus.</text>
</comment>
<comment type="similarity">
    <text evidence="2">Belongs to the EMC4 family.</text>
</comment>
<organism>
    <name type="scientific">Bos taurus</name>
    <name type="common">Bovine</name>
    <dbReference type="NCBI Taxonomy" id="9913"/>
    <lineage>
        <taxon>Eukaryota</taxon>
        <taxon>Metazoa</taxon>
        <taxon>Chordata</taxon>
        <taxon>Craniata</taxon>
        <taxon>Vertebrata</taxon>
        <taxon>Euteleostomi</taxon>
        <taxon>Mammalia</taxon>
        <taxon>Eutheria</taxon>
        <taxon>Laurasiatheria</taxon>
        <taxon>Artiodactyla</taxon>
        <taxon>Ruminantia</taxon>
        <taxon>Pecora</taxon>
        <taxon>Bovidae</taxon>
        <taxon>Bovinae</taxon>
        <taxon>Bos</taxon>
    </lineage>
</organism>
<protein>
    <recommendedName>
        <fullName>ER membrane protein complex subunit 4</fullName>
    </recommendedName>
    <alternativeName>
        <fullName>Transmembrane protein 85</fullName>
    </alternativeName>
</protein>
<feature type="initiator methionine" description="Removed" evidence="1">
    <location>
        <position position="1"/>
    </location>
</feature>
<feature type="chain" id="PRO_0000251913" description="ER membrane protein complex subunit 4">
    <location>
        <begin position="2"/>
        <end position="183"/>
    </location>
</feature>
<feature type="topological domain" description="Cytoplasmic" evidence="1">
    <location>
        <begin position="2"/>
        <end position="66"/>
    </location>
</feature>
<feature type="transmembrane region" description="Helical" evidence="1">
    <location>
        <begin position="67"/>
        <end position="87"/>
    </location>
</feature>
<feature type="topological domain" description="Lumenal" evidence="1">
    <location>
        <begin position="88"/>
        <end position="98"/>
    </location>
</feature>
<feature type="transmembrane region" description="Helical" evidence="1">
    <location>
        <begin position="99"/>
        <end position="120"/>
    </location>
</feature>
<feature type="topological domain" description="Cytoplasmic" evidence="1">
    <location>
        <begin position="121"/>
        <end position="127"/>
    </location>
</feature>
<feature type="transmembrane region" description="Helical" evidence="1">
    <location>
        <begin position="128"/>
        <end position="148"/>
    </location>
</feature>
<feature type="topological domain" description="Lumenal" evidence="1">
    <location>
        <begin position="149"/>
        <end position="183"/>
    </location>
</feature>
<feature type="modified residue" description="N-acetylthreonine" evidence="1">
    <location>
        <position position="2"/>
    </location>
</feature>
<keyword id="KW-0007">Acetylation</keyword>
<keyword id="KW-0053">Apoptosis</keyword>
<keyword id="KW-0256">Endoplasmic reticulum</keyword>
<keyword id="KW-0472">Membrane</keyword>
<keyword id="KW-1185">Reference proteome</keyword>
<keyword id="KW-0812">Transmembrane</keyword>
<keyword id="KW-1133">Transmembrane helix</keyword>
<name>EMC4_BOVIN</name>
<accession>Q3T0K8</accession>
<dbReference type="EMBL" id="BC102353">
    <property type="protein sequence ID" value="AAI02354.1"/>
    <property type="molecule type" value="mRNA"/>
</dbReference>
<dbReference type="RefSeq" id="NP_001029719.1">
    <property type="nucleotide sequence ID" value="NM_001034547.1"/>
</dbReference>
<dbReference type="SMR" id="Q3T0K8"/>
<dbReference type="FunCoup" id="Q3T0K8">
    <property type="interactions" value="4437"/>
</dbReference>
<dbReference type="STRING" id="9913.ENSBTAP00000008411"/>
<dbReference type="PaxDb" id="9913-ENSBTAP00000008411"/>
<dbReference type="Ensembl" id="ENSBTAT00000008411.4">
    <property type="protein sequence ID" value="ENSBTAP00000008411.3"/>
    <property type="gene ID" value="ENSBTAG00000006416.5"/>
</dbReference>
<dbReference type="GeneID" id="523162"/>
<dbReference type="KEGG" id="bta:523162"/>
<dbReference type="CTD" id="51234"/>
<dbReference type="VEuPathDB" id="HostDB:ENSBTAG00000006416"/>
<dbReference type="VGNC" id="VGNC:28465">
    <property type="gene designation" value="EMC4"/>
</dbReference>
<dbReference type="eggNOG" id="KOG3318">
    <property type="taxonomic scope" value="Eukaryota"/>
</dbReference>
<dbReference type="GeneTree" id="ENSGT00390000006970"/>
<dbReference type="HOGENOM" id="CLU_098404_0_1_1"/>
<dbReference type="InParanoid" id="Q3T0K8"/>
<dbReference type="OMA" id="FMMWMVG"/>
<dbReference type="OrthoDB" id="369569at2759"/>
<dbReference type="TreeFam" id="TF313750"/>
<dbReference type="Proteomes" id="UP000009136">
    <property type="component" value="Chromosome 10"/>
</dbReference>
<dbReference type="Bgee" id="ENSBTAG00000006416">
    <property type="expression patterns" value="Expressed in retina and 103 other cell types or tissues"/>
</dbReference>
<dbReference type="GO" id="GO:0072546">
    <property type="term" value="C:EMC complex"/>
    <property type="evidence" value="ECO:0000250"/>
    <property type="project" value="UniProtKB"/>
</dbReference>
<dbReference type="GO" id="GO:0005789">
    <property type="term" value="C:endoplasmic reticulum membrane"/>
    <property type="evidence" value="ECO:0000250"/>
    <property type="project" value="UniProtKB"/>
</dbReference>
<dbReference type="GO" id="GO:0016020">
    <property type="term" value="C:membrane"/>
    <property type="evidence" value="ECO:0000250"/>
    <property type="project" value="UniProtKB"/>
</dbReference>
<dbReference type="GO" id="GO:0032977">
    <property type="term" value="F:membrane insertase activity"/>
    <property type="evidence" value="ECO:0007669"/>
    <property type="project" value="Ensembl"/>
</dbReference>
<dbReference type="GO" id="GO:0006915">
    <property type="term" value="P:apoptotic process"/>
    <property type="evidence" value="ECO:0007669"/>
    <property type="project" value="UniProtKB-KW"/>
</dbReference>
<dbReference type="GO" id="GO:0045050">
    <property type="term" value="P:protein insertion into ER membrane by stop-transfer membrane-anchor sequence"/>
    <property type="evidence" value="ECO:0000250"/>
    <property type="project" value="UniProtKB"/>
</dbReference>
<dbReference type="GO" id="GO:0071816">
    <property type="term" value="P:tail-anchored membrane protein insertion into ER membrane"/>
    <property type="evidence" value="ECO:0000250"/>
    <property type="project" value="UniProtKB"/>
</dbReference>
<dbReference type="InterPro" id="IPR009445">
    <property type="entry name" value="TMEM85/Emc4"/>
</dbReference>
<dbReference type="PANTHER" id="PTHR19315">
    <property type="entry name" value="ER MEMBRANE PROTEIN COMPLEX SUBUNIT 4"/>
    <property type="match status" value="1"/>
</dbReference>
<dbReference type="Pfam" id="PF06417">
    <property type="entry name" value="EMC4"/>
    <property type="match status" value="1"/>
</dbReference>
<dbReference type="PIRSF" id="PIRSF017207">
    <property type="entry name" value="UCP017207_TM-p85"/>
    <property type="match status" value="1"/>
</dbReference>
<reference key="1">
    <citation type="submission" date="2005-08" db="EMBL/GenBank/DDBJ databases">
        <authorList>
            <consortium name="NIH - Mammalian Gene Collection (MGC) project"/>
        </authorList>
    </citation>
    <scope>NUCLEOTIDE SEQUENCE [LARGE SCALE MRNA]</scope>
    <source>
        <strain>Crossbred X Angus</strain>
        <tissue>Ileum</tissue>
    </source>
</reference>
<evidence type="ECO:0000250" key="1">
    <source>
        <dbReference type="UniProtKB" id="Q5J8M3"/>
    </source>
</evidence>
<evidence type="ECO:0000305" key="2"/>
<proteinExistence type="evidence at transcript level"/>
<sequence>MTAQGSLVANRGRRFKWAIELSGPGGGSRGRSDRGGGQGDSLYPVGYLDKQVPDTSVQETDRILVEKRCWDIALGPLKQIPMNLFIMYMAGNTISIFPTMMVCMMAWRPIQALMAISATFKMLESSSQKFLQGLVYLIGNLMGLALAVYKCQSMGLLPTHASDWLAFIEPPERMEFSGGGLLL</sequence>